<gene>
    <name type="ordered locus">BCE33L1059</name>
</gene>
<keyword id="KW-0547">Nucleotide-binding</keyword>
<accession>Q63EK2</accession>
<proteinExistence type="inferred from homology"/>
<comment type="function">
    <text evidence="1">Nucleotide-binding protein.</text>
</comment>
<comment type="similarity">
    <text evidence="1">Belongs to the YajQ family.</text>
</comment>
<protein>
    <recommendedName>
        <fullName evidence="1">Nucleotide-binding protein BCE33L1059</fullName>
    </recommendedName>
</protein>
<name>Y1059_BACCZ</name>
<feature type="chain" id="PRO_0000261916" description="Nucleotide-binding protein BCE33L1059">
    <location>
        <begin position="1"/>
        <end position="163"/>
    </location>
</feature>
<organism>
    <name type="scientific">Bacillus cereus (strain ZK / E33L)</name>
    <dbReference type="NCBI Taxonomy" id="288681"/>
    <lineage>
        <taxon>Bacteria</taxon>
        <taxon>Bacillati</taxon>
        <taxon>Bacillota</taxon>
        <taxon>Bacilli</taxon>
        <taxon>Bacillales</taxon>
        <taxon>Bacillaceae</taxon>
        <taxon>Bacillus</taxon>
        <taxon>Bacillus cereus group</taxon>
    </lineage>
</organism>
<evidence type="ECO:0000255" key="1">
    <source>
        <dbReference type="HAMAP-Rule" id="MF_00632"/>
    </source>
</evidence>
<sequence>MAKDSSFDIVSKVELPEVTNAINTALKEIQNRYDFKGSKSDIKLEKEVLVLTSDDEFKLEQVKDVLISKLVKRNVPIKNLDYGKVEAAAGNTVRQRATLQQGIDKDNAKKINNIIKEMKLKVKTQVQDDQVRVTAKSRDDLQAVIAAVRSADLPIDVQFINYR</sequence>
<dbReference type="EMBL" id="CP000001">
    <property type="protein sequence ID" value="AAU19186.1"/>
    <property type="molecule type" value="Genomic_DNA"/>
</dbReference>
<dbReference type="RefSeq" id="WP_001040153.1">
    <property type="nucleotide sequence ID" value="NZ_CP009968.1"/>
</dbReference>
<dbReference type="SMR" id="Q63EK2"/>
<dbReference type="KEGG" id="bcz:BCE33L1059"/>
<dbReference type="PATRIC" id="fig|288681.22.peg.4507"/>
<dbReference type="Proteomes" id="UP000002612">
    <property type="component" value="Chromosome"/>
</dbReference>
<dbReference type="GO" id="GO:0005829">
    <property type="term" value="C:cytosol"/>
    <property type="evidence" value="ECO:0007669"/>
    <property type="project" value="TreeGrafter"/>
</dbReference>
<dbReference type="GO" id="GO:0000166">
    <property type="term" value="F:nucleotide binding"/>
    <property type="evidence" value="ECO:0007669"/>
    <property type="project" value="TreeGrafter"/>
</dbReference>
<dbReference type="CDD" id="cd11740">
    <property type="entry name" value="YajQ_like"/>
    <property type="match status" value="1"/>
</dbReference>
<dbReference type="FunFam" id="3.30.70.990:FF:000002">
    <property type="entry name" value="UPF0234 protein LEP1GSC067_4943"/>
    <property type="match status" value="1"/>
</dbReference>
<dbReference type="FunFam" id="3.30.70.860:FF:000003">
    <property type="entry name" value="UPF0234 protein YBT020_06460"/>
    <property type="match status" value="1"/>
</dbReference>
<dbReference type="Gene3D" id="3.30.70.860">
    <property type="match status" value="1"/>
</dbReference>
<dbReference type="Gene3D" id="3.30.70.990">
    <property type="entry name" value="YajQ-like, domain 2"/>
    <property type="match status" value="1"/>
</dbReference>
<dbReference type="HAMAP" id="MF_00632">
    <property type="entry name" value="YajQ"/>
    <property type="match status" value="1"/>
</dbReference>
<dbReference type="InterPro" id="IPR007551">
    <property type="entry name" value="DUF520"/>
</dbReference>
<dbReference type="InterPro" id="IPR035571">
    <property type="entry name" value="UPF0234-like_C"/>
</dbReference>
<dbReference type="InterPro" id="IPR035570">
    <property type="entry name" value="UPF0234_N"/>
</dbReference>
<dbReference type="InterPro" id="IPR036183">
    <property type="entry name" value="YajQ-like_sf"/>
</dbReference>
<dbReference type="NCBIfam" id="NF003819">
    <property type="entry name" value="PRK05412.1"/>
    <property type="match status" value="1"/>
</dbReference>
<dbReference type="PANTHER" id="PTHR30476">
    <property type="entry name" value="UPF0234 PROTEIN YAJQ"/>
    <property type="match status" value="1"/>
</dbReference>
<dbReference type="PANTHER" id="PTHR30476:SF0">
    <property type="entry name" value="UPF0234 PROTEIN YAJQ"/>
    <property type="match status" value="1"/>
</dbReference>
<dbReference type="Pfam" id="PF04461">
    <property type="entry name" value="DUF520"/>
    <property type="match status" value="1"/>
</dbReference>
<dbReference type="SUPFAM" id="SSF89963">
    <property type="entry name" value="YajQ-like"/>
    <property type="match status" value="2"/>
</dbReference>
<reference key="1">
    <citation type="journal article" date="2006" name="J. Bacteriol.">
        <title>Pathogenomic sequence analysis of Bacillus cereus and Bacillus thuringiensis isolates closely related to Bacillus anthracis.</title>
        <authorList>
            <person name="Han C.S."/>
            <person name="Xie G."/>
            <person name="Challacombe J.F."/>
            <person name="Altherr M.R."/>
            <person name="Bhotika S.S."/>
            <person name="Bruce D."/>
            <person name="Campbell C.S."/>
            <person name="Campbell M.L."/>
            <person name="Chen J."/>
            <person name="Chertkov O."/>
            <person name="Cleland C."/>
            <person name="Dimitrijevic M."/>
            <person name="Doggett N.A."/>
            <person name="Fawcett J.J."/>
            <person name="Glavina T."/>
            <person name="Goodwin L.A."/>
            <person name="Hill K.K."/>
            <person name="Hitchcock P."/>
            <person name="Jackson P.J."/>
            <person name="Keim P."/>
            <person name="Kewalramani A.R."/>
            <person name="Longmire J."/>
            <person name="Lucas S."/>
            <person name="Malfatti S."/>
            <person name="McMurry K."/>
            <person name="Meincke L.J."/>
            <person name="Misra M."/>
            <person name="Moseman B.L."/>
            <person name="Mundt M."/>
            <person name="Munk A.C."/>
            <person name="Okinaka R.T."/>
            <person name="Parson-Quintana B."/>
            <person name="Reilly L.P."/>
            <person name="Richardson P."/>
            <person name="Robinson D.L."/>
            <person name="Rubin E."/>
            <person name="Saunders E."/>
            <person name="Tapia R."/>
            <person name="Tesmer J.G."/>
            <person name="Thayer N."/>
            <person name="Thompson L.S."/>
            <person name="Tice H."/>
            <person name="Ticknor L.O."/>
            <person name="Wills P.L."/>
            <person name="Brettin T.S."/>
            <person name="Gilna P."/>
        </authorList>
    </citation>
    <scope>NUCLEOTIDE SEQUENCE [LARGE SCALE GENOMIC DNA]</scope>
    <source>
        <strain>ZK / E33L</strain>
    </source>
</reference>